<name>RHAM_SHISS</name>
<proteinExistence type="inferred from homology"/>
<protein>
    <recommendedName>
        <fullName evidence="1">L-rhamnose mutarotase</fullName>
        <ecNumber evidence="1">5.1.3.32</ecNumber>
    </recommendedName>
    <alternativeName>
        <fullName evidence="1">Rhamnose 1-epimerase</fullName>
    </alternativeName>
    <alternativeName>
        <fullName evidence="1">Type-3 mutarotase</fullName>
    </alternativeName>
</protein>
<reference key="1">
    <citation type="journal article" date="2005" name="Nucleic Acids Res.">
        <title>Genome dynamics and diversity of Shigella species, the etiologic agents of bacillary dysentery.</title>
        <authorList>
            <person name="Yang F."/>
            <person name="Yang J."/>
            <person name="Zhang X."/>
            <person name="Chen L."/>
            <person name="Jiang Y."/>
            <person name="Yan Y."/>
            <person name="Tang X."/>
            <person name="Wang J."/>
            <person name="Xiong Z."/>
            <person name="Dong J."/>
            <person name="Xue Y."/>
            <person name="Zhu Y."/>
            <person name="Xu X."/>
            <person name="Sun L."/>
            <person name="Chen S."/>
            <person name="Nie H."/>
            <person name="Peng J."/>
            <person name="Xu J."/>
            <person name="Wang Y."/>
            <person name="Yuan Z."/>
            <person name="Wen Y."/>
            <person name="Yao Z."/>
            <person name="Shen Y."/>
            <person name="Qiang B."/>
            <person name="Hou Y."/>
            <person name="Yu J."/>
            <person name="Jin Q."/>
        </authorList>
    </citation>
    <scope>NUCLEOTIDE SEQUENCE [LARGE SCALE GENOMIC DNA]</scope>
    <source>
        <strain>Ss046</strain>
    </source>
</reference>
<accession>Q3YV75</accession>
<organism>
    <name type="scientific">Shigella sonnei (strain Ss046)</name>
    <dbReference type="NCBI Taxonomy" id="300269"/>
    <lineage>
        <taxon>Bacteria</taxon>
        <taxon>Pseudomonadati</taxon>
        <taxon>Pseudomonadota</taxon>
        <taxon>Gammaproteobacteria</taxon>
        <taxon>Enterobacterales</taxon>
        <taxon>Enterobacteriaceae</taxon>
        <taxon>Shigella</taxon>
    </lineage>
</organism>
<keyword id="KW-0119">Carbohydrate metabolism</keyword>
<keyword id="KW-0963">Cytoplasm</keyword>
<keyword id="KW-0413">Isomerase</keyword>
<keyword id="KW-1185">Reference proteome</keyword>
<keyword id="KW-0684">Rhamnose metabolism</keyword>
<evidence type="ECO:0000255" key="1">
    <source>
        <dbReference type="HAMAP-Rule" id="MF_01663"/>
    </source>
</evidence>
<feature type="chain" id="PRO_0000344608" description="L-rhamnose mutarotase">
    <location>
        <begin position="1"/>
        <end position="104"/>
    </location>
</feature>
<feature type="active site" description="Proton donor" evidence="1">
    <location>
        <position position="22"/>
    </location>
</feature>
<feature type="binding site" evidence="1">
    <location>
        <position position="18"/>
    </location>
    <ligand>
        <name>substrate</name>
    </ligand>
</feature>
<feature type="binding site" evidence="1">
    <location>
        <position position="41"/>
    </location>
    <ligand>
        <name>substrate</name>
    </ligand>
</feature>
<feature type="binding site" evidence="1">
    <location>
        <begin position="76"/>
        <end position="77"/>
    </location>
    <ligand>
        <name>substrate</name>
    </ligand>
</feature>
<sequence>MIRKAFVMQVNPDAHEEYQRRHNPIWPELEAVLKSHGAHNYAIYLDKARNLLFATVEIESEERWNAVASTDVCQRWWKYMTDVMPANPDNSPVSSELQEVFYLP</sequence>
<dbReference type="EC" id="5.1.3.32" evidence="1"/>
<dbReference type="EMBL" id="CP000038">
    <property type="protein sequence ID" value="AAZ90587.1"/>
    <property type="molecule type" value="Genomic_DNA"/>
</dbReference>
<dbReference type="RefSeq" id="WP_000619503.1">
    <property type="nucleotide sequence ID" value="NC_007384.1"/>
</dbReference>
<dbReference type="SMR" id="Q3YV75"/>
<dbReference type="GeneID" id="93778037"/>
<dbReference type="KEGG" id="ssn:SSON_4071"/>
<dbReference type="HOGENOM" id="CLU_100689_2_0_6"/>
<dbReference type="UniPathway" id="UPA00125"/>
<dbReference type="Proteomes" id="UP000002529">
    <property type="component" value="Chromosome"/>
</dbReference>
<dbReference type="GO" id="GO:0005737">
    <property type="term" value="C:cytoplasm"/>
    <property type="evidence" value="ECO:0007669"/>
    <property type="project" value="UniProtKB-SubCell"/>
</dbReference>
<dbReference type="GO" id="GO:0062192">
    <property type="term" value="F:L-rhamnose mutarotase activity"/>
    <property type="evidence" value="ECO:0007669"/>
    <property type="project" value="UniProtKB-EC"/>
</dbReference>
<dbReference type="GO" id="GO:0019301">
    <property type="term" value="P:rhamnose catabolic process"/>
    <property type="evidence" value="ECO:0007669"/>
    <property type="project" value="TreeGrafter"/>
</dbReference>
<dbReference type="FunFam" id="3.30.70.100:FF:000013">
    <property type="entry name" value="L-rhamnose mutarotase"/>
    <property type="match status" value="1"/>
</dbReference>
<dbReference type="Gene3D" id="3.30.70.100">
    <property type="match status" value="1"/>
</dbReference>
<dbReference type="HAMAP" id="MF_01663">
    <property type="entry name" value="L_rham_rotase"/>
    <property type="match status" value="1"/>
</dbReference>
<dbReference type="InterPro" id="IPR011008">
    <property type="entry name" value="Dimeric_a/b-barrel"/>
</dbReference>
<dbReference type="InterPro" id="IPR013448">
    <property type="entry name" value="L-rhamnose_mutarotase"/>
</dbReference>
<dbReference type="InterPro" id="IPR008000">
    <property type="entry name" value="Rham/fucose_mutarotase"/>
</dbReference>
<dbReference type="NCBIfam" id="TIGR02625">
    <property type="entry name" value="YiiL_rotase"/>
    <property type="match status" value="1"/>
</dbReference>
<dbReference type="PANTHER" id="PTHR34389">
    <property type="entry name" value="L-RHAMNOSE MUTAROTASE"/>
    <property type="match status" value="1"/>
</dbReference>
<dbReference type="PANTHER" id="PTHR34389:SF2">
    <property type="entry name" value="L-RHAMNOSE MUTAROTASE"/>
    <property type="match status" value="1"/>
</dbReference>
<dbReference type="Pfam" id="PF05336">
    <property type="entry name" value="rhaM"/>
    <property type="match status" value="1"/>
</dbReference>
<dbReference type="SUPFAM" id="SSF54909">
    <property type="entry name" value="Dimeric alpha+beta barrel"/>
    <property type="match status" value="1"/>
</dbReference>
<gene>
    <name evidence="1" type="primary">rhaM</name>
    <name type="ordered locus">SSON_4071</name>
</gene>
<comment type="function">
    <text evidence="1">Involved in the anomeric conversion of L-rhamnose.</text>
</comment>
<comment type="catalytic activity">
    <reaction evidence="1">
        <text>alpha-L-rhamnose = beta-L-rhamnose</text>
        <dbReference type="Rhea" id="RHEA:25584"/>
        <dbReference type="ChEBI" id="CHEBI:27586"/>
        <dbReference type="ChEBI" id="CHEBI:27907"/>
        <dbReference type="EC" id="5.1.3.32"/>
    </reaction>
</comment>
<comment type="pathway">
    <text evidence="1">Carbohydrate metabolism; L-rhamnose metabolism.</text>
</comment>
<comment type="subunit">
    <text evidence="1">Homodimer.</text>
</comment>
<comment type="subcellular location">
    <subcellularLocation>
        <location evidence="1">Cytoplasm</location>
    </subcellularLocation>
</comment>
<comment type="similarity">
    <text evidence="1">Belongs to the rhamnose mutarotase family.</text>
</comment>